<keyword id="KW-0175">Coiled coil</keyword>
<keyword id="KW-0238">DNA-binding</keyword>
<keyword id="KW-1185">Reference proteome</keyword>
<keyword id="KW-0804">Transcription</keyword>
<keyword id="KW-0805">Transcription regulation</keyword>
<organism>
    <name type="scientific">Oceanobacillus iheyensis (strain DSM 14371 / CIP 107618 / JCM 11309 / KCTC 3954 / HTE831)</name>
    <dbReference type="NCBI Taxonomy" id="221109"/>
    <lineage>
        <taxon>Bacteria</taxon>
        <taxon>Bacillati</taxon>
        <taxon>Bacillota</taxon>
        <taxon>Bacilli</taxon>
        <taxon>Bacillales</taxon>
        <taxon>Bacillaceae</taxon>
        <taxon>Oceanobacillus</taxon>
    </lineage>
</organism>
<feature type="chain" id="PRO_0000176949" description="Transcription elongation factor GreA">
    <location>
        <begin position="1"/>
        <end position="158"/>
    </location>
</feature>
<feature type="coiled-coil region" evidence="1">
    <location>
        <begin position="47"/>
        <end position="75"/>
    </location>
</feature>
<gene>
    <name evidence="1" type="primary">greA</name>
    <name type="ordered locus">OB2002</name>
</gene>
<sequence>MTVEKSYYMTQEGKDKLEEELHYLKTDRRQEVVERIKVARDFGDLSENSEYDAAKDEQAFVEQRITQVEKMIRNAVIIENDNDNPNIVSLGKSVSFVELPDGDEETYTIVGSAEADPFEGKISNDSPMATSLLGKEIGEEVTVTTPGGDIDVRITNVE</sequence>
<name>GREA_OCEIH</name>
<reference key="1">
    <citation type="journal article" date="2002" name="Nucleic Acids Res.">
        <title>Genome sequence of Oceanobacillus iheyensis isolated from the Iheya Ridge and its unexpected adaptive capabilities to extreme environments.</title>
        <authorList>
            <person name="Takami H."/>
            <person name="Takaki Y."/>
            <person name="Uchiyama I."/>
        </authorList>
    </citation>
    <scope>NUCLEOTIDE SEQUENCE [LARGE SCALE GENOMIC DNA]</scope>
    <source>
        <strain>DSM 14371 / CIP 107618 / JCM 11309 / KCTC 3954 / HTE831</strain>
    </source>
</reference>
<accession>Q8EPT6</accession>
<proteinExistence type="inferred from homology"/>
<dbReference type="EMBL" id="BA000028">
    <property type="protein sequence ID" value="BAC13958.1"/>
    <property type="molecule type" value="Genomic_DNA"/>
</dbReference>
<dbReference type="RefSeq" id="WP_011066398.1">
    <property type="nucleotide sequence ID" value="NC_004193.1"/>
</dbReference>
<dbReference type="SMR" id="Q8EPT6"/>
<dbReference type="STRING" id="221109.gene:10734248"/>
<dbReference type="KEGG" id="oih:OB2002"/>
<dbReference type="eggNOG" id="COG0782">
    <property type="taxonomic scope" value="Bacteria"/>
</dbReference>
<dbReference type="HOGENOM" id="CLU_101379_2_1_9"/>
<dbReference type="OrthoDB" id="9808774at2"/>
<dbReference type="PhylomeDB" id="Q8EPT6"/>
<dbReference type="Proteomes" id="UP000000822">
    <property type="component" value="Chromosome"/>
</dbReference>
<dbReference type="GO" id="GO:0003677">
    <property type="term" value="F:DNA binding"/>
    <property type="evidence" value="ECO:0007669"/>
    <property type="project" value="UniProtKB-UniRule"/>
</dbReference>
<dbReference type="GO" id="GO:0070063">
    <property type="term" value="F:RNA polymerase binding"/>
    <property type="evidence" value="ECO:0007669"/>
    <property type="project" value="InterPro"/>
</dbReference>
<dbReference type="GO" id="GO:0006354">
    <property type="term" value="P:DNA-templated transcription elongation"/>
    <property type="evidence" value="ECO:0007669"/>
    <property type="project" value="TreeGrafter"/>
</dbReference>
<dbReference type="GO" id="GO:0032784">
    <property type="term" value="P:regulation of DNA-templated transcription elongation"/>
    <property type="evidence" value="ECO:0007669"/>
    <property type="project" value="UniProtKB-UniRule"/>
</dbReference>
<dbReference type="FunFam" id="1.10.287.180:FF:000001">
    <property type="entry name" value="Transcription elongation factor GreA"/>
    <property type="match status" value="1"/>
</dbReference>
<dbReference type="FunFam" id="3.10.50.30:FF:000001">
    <property type="entry name" value="Transcription elongation factor GreA"/>
    <property type="match status" value="1"/>
</dbReference>
<dbReference type="Gene3D" id="3.10.50.30">
    <property type="entry name" value="Transcription elongation factor, GreA/GreB, C-terminal domain"/>
    <property type="match status" value="1"/>
</dbReference>
<dbReference type="Gene3D" id="1.10.287.180">
    <property type="entry name" value="Transcription elongation factor, GreA/GreB, N-terminal domain"/>
    <property type="match status" value="1"/>
</dbReference>
<dbReference type="HAMAP" id="MF_00105">
    <property type="entry name" value="GreA_GreB"/>
    <property type="match status" value="1"/>
</dbReference>
<dbReference type="InterPro" id="IPR036953">
    <property type="entry name" value="GreA/GreB_C_sf"/>
</dbReference>
<dbReference type="InterPro" id="IPR018151">
    <property type="entry name" value="TF_GreA/GreB_CS"/>
</dbReference>
<dbReference type="InterPro" id="IPR006359">
    <property type="entry name" value="Tscrpt_elong_fac_GreA"/>
</dbReference>
<dbReference type="InterPro" id="IPR028624">
    <property type="entry name" value="Tscrpt_elong_fac_GreA/B"/>
</dbReference>
<dbReference type="InterPro" id="IPR001437">
    <property type="entry name" value="Tscrpt_elong_fac_GreA/B_C"/>
</dbReference>
<dbReference type="InterPro" id="IPR023459">
    <property type="entry name" value="Tscrpt_elong_fac_GreA/B_fam"/>
</dbReference>
<dbReference type="InterPro" id="IPR022691">
    <property type="entry name" value="Tscrpt_elong_fac_GreA/B_N"/>
</dbReference>
<dbReference type="InterPro" id="IPR036805">
    <property type="entry name" value="Tscrpt_elong_fac_GreA/B_N_sf"/>
</dbReference>
<dbReference type="NCBIfam" id="TIGR01462">
    <property type="entry name" value="greA"/>
    <property type="match status" value="1"/>
</dbReference>
<dbReference type="NCBIfam" id="NF001263">
    <property type="entry name" value="PRK00226.1-4"/>
    <property type="match status" value="1"/>
</dbReference>
<dbReference type="PANTHER" id="PTHR30437">
    <property type="entry name" value="TRANSCRIPTION ELONGATION FACTOR GREA"/>
    <property type="match status" value="1"/>
</dbReference>
<dbReference type="PANTHER" id="PTHR30437:SF4">
    <property type="entry name" value="TRANSCRIPTION ELONGATION FACTOR GREA"/>
    <property type="match status" value="1"/>
</dbReference>
<dbReference type="Pfam" id="PF01272">
    <property type="entry name" value="GreA_GreB"/>
    <property type="match status" value="1"/>
</dbReference>
<dbReference type="Pfam" id="PF03449">
    <property type="entry name" value="GreA_GreB_N"/>
    <property type="match status" value="1"/>
</dbReference>
<dbReference type="PIRSF" id="PIRSF006092">
    <property type="entry name" value="GreA_GreB"/>
    <property type="match status" value="1"/>
</dbReference>
<dbReference type="SUPFAM" id="SSF54534">
    <property type="entry name" value="FKBP-like"/>
    <property type="match status" value="1"/>
</dbReference>
<dbReference type="SUPFAM" id="SSF46557">
    <property type="entry name" value="GreA transcript cleavage protein, N-terminal domain"/>
    <property type="match status" value="1"/>
</dbReference>
<dbReference type="PROSITE" id="PS00829">
    <property type="entry name" value="GREAB_1"/>
    <property type="match status" value="1"/>
</dbReference>
<dbReference type="PROSITE" id="PS00830">
    <property type="entry name" value="GREAB_2"/>
    <property type="match status" value="1"/>
</dbReference>
<evidence type="ECO:0000255" key="1">
    <source>
        <dbReference type="HAMAP-Rule" id="MF_00105"/>
    </source>
</evidence>
<comment type="function">
    <text evidence="1">Necessary for efficient RNA polymerase transcription elongation past template-encoded arresting sites. The arresting sites in DNA have the property of trapping a certain fraction of elongating RNA polymerases that pass through, resulting in locked ternary complexes. Cleavage of the nascent transcript by cleavage factors such as GreA or GreB allows the resumption of elongation from the new 3'terminus. GreA releases sequences of 2 to 3 nucleotides.</text>
</comment>
<comment type="similarity">
    <text evidence="1">Belongs to the GreA/GreB family.</text>
</comment>
<protein>
    <recommendedName>
        <fullName evidence="1">Transcription elongation factor GreA</fullName>
    </recommendedName>
    <alternativeName>
        <fullName evidence="1">Transcript cleavage factor GreA</fullName>
    </alternativeName>
</protein>